<dbReference type="EC" id="1.18.6.1" evidence="1"/>
<dbReference type="EMBL" id="CP000612">
    <property type="protein sequence ID" value="ABO51325.1"/>
    <property type="molecule type" value="Genomic_DNA"/>
</dbReference>
<dbReference type="RefSeq" id="WP_011879120.1">
    <property type="nucleotide sequence ID" value="NC_009253.1"/>
</dbReference>
<dbReference type="SMR" id="A4J8C2"/>
<dbReference type="STRING" id="349161.Dred_2821"/>
<dbReference type="KEGG" id="drm:Dred_2821"/>
<dbReference type="eggNOG" id="COG1348">
    <property type="taxonomic scope" value="Bacteria"/>
</dbReference>
<dbReference type="HOGENOM" id="CLU_059373_0_0_9"/>
<dbReference type="OrthoDB" id="9778641at2"/>
<dbReference type="Proteomes" id="UP000001556">
    <property type="component" value="Chromosome"/>
</dbReference>
<dbReference type="GO" id="GO:0051539">
    <property type="term" value="F:4 iron, 4 sulfur cluster binding"/>
    <property type="evidence" value="ECO:0007669"/>
    <property type="project" value="UniProtKB-KW"/>
</dbReference>
<dbReference type="GO" id="GO:0005524">
    <property type="term" value="F:ATP binding"/>
    <property type="evidence" value="ECO:0007669"/>
    <property type="project" value="UniProtKB-UniRule"/>
</dbReference>
<dbReference type="GO" id="GO:0046872">
    <property type="term" value="F:metal ion binding"/>
    <property type="evidence" value="ECO:0007669"/>
    <property type="project" value="UniProtKB-KW"/>
</dbReference>
<dbReference type="GO" id="GO:0016163">
    <property type="term" value="F:nitrogenase activity"/>
    <property type="evidence" value="ECO:0007669"/>
    <property type="project" value="UniProtKB-UniRule"/>
</dbReference>
<dbReference type="GO" id="GO:0009399">
    <property type="term" value="P:nitrogen fixation"/>
    <property type="evidence" value="ECO:0007669"/>
    <property type="project" value="UniProtKB-UniRule"/>
</dbReference>
<dbReference type="CDD" id="cd02040">
    <property type="entry name" value="NifH"/>
    <property type="match status" value="1"/>
</dbReference>
<dbReference type="Gene3D" id="3.40.50.300">
    <property type="entry name" value="P-loop containing nucleotide triphosphate hydrolases"/>
    <property type="match status" value="1"/>
</dbReference>
<dbReference type="HAMAP" id="MF_00533">
    <property type="entry name" value="NifH"/>
    <property type="match status" value="1"/>
</dbReference>
<dbReference type="InterPro" id="IPR030655">
    <property type="entry name" value="NifH/chlL_CS"/>
</dbReference>
<dbReference type="InterPro" id="IPR000392">
    <property type="entry name" value="NifH/frxC"/>
</dbReference>
<dbReference type="InterPro" id="IPR005977">
    <property type="entry name" value="Nitrogenase_Fe_NifH"/>
</dbReference>
<dbReference type="InterPro" id="IPR027417">
    <property type="entry name" value="P-loop_NTPase"/>
</dbReference>
<dbReference type="NCBIfam" id="TIGR01287">
    <property type="entry name" value="nifH"/>
    <property type="match status" value="1"/>
</dbReference>
<dbReference type="PANTHER" id="PTHR42864">
    <property type="entry name" value="LIGHT-INDEPENDENT PROTOCHLOROPHYLLIDE REDUCTASE IRON-SULFUR ATP-BINDING PROTEIN"/>
    <property type="match status" value="1"/>
</dbReference>
<dbReference type="PANTHER" id="PTHR42864:SF2">
    <property type="entry name" value="LIGHT-INDEPENDENT PROTOCHLOROPHYLLIDE REDUCTASE IRON-SULFUR ATP-BINDING PROTEIN"/>
    <property type="match status" value="1"/>
</dbReference>
<dbReference type="Pfam" id="PF00142">
    <property type="entry name" value="Fer4_NifH"/>
    <property type="match status" value="1"/>
</dbReference>
<dbReference type="PIRSF" id="PIRSF000363">
    <property type="entry name" value="Nitrogenase_iron"/>
    <property type="match status" value="1"/>
</dbReference>
<dbReference type="PRINTS" id="PR00091">
    <property type="entry name" value="NITROGNASEII"/>
</dbReference>
<dbReference type="SUPFAM" id="SSF52540">
    <property type="entry name" value="P-loop containing nucleoside triphosphate hydrolases"/>
    <property type="match status" value="1"/>
</dbReference>
<dbReference type="PROSITE" id="PS00746">
    <property type="entry name" value="NIFH_FRXC_1"/>
    <property type="match status" value="1"/>
</dbReference>
<dbReference type="PROSITE" id="PS00692">
    <property type="entry name" value="NIFH_FRXC_2"/>
    <property type="match status" value="1"/>
</dbReference>
<dbReference type="PROSITE" id="PS51026">
    <property type="entry name" value="NIFH_FRXC_3"/>
    <property type="match status" value="1"/>
</dbReference>
<reference key="1">
    <citation type="submission" date="2007-03" db="EMBL/GenBank/DDBJ databases">
        <title>Complete sequence of Desulfotomaculum reducens MI-1.</title>
        <authorList>
            <consortium name="US DOE Joint Genome Institute"/>
            <person name="Copeland A."/>
            <person name="Lucas S."/>
            <person name="Lapidus A."/>
            <person name="Barry K."/>
            <person name="Detter J.C."/>
            <person name="Glavina del Rio T."/>
            <person name="Hammon N."/>
            <person name="Israni S."/>
            <person name="Dalin E."/>
            <person name="Tice H."/>
            <person name="Pitluck S."/>
            <person name="Sims D."/>
            <person name="Brettin T."/>
            <person name="Bruce D."/>
            <person name="Han C."/>
            <person name="Tapia R."/>
            <person name="Schmutz J."/>
            <person name="Larimer F."/>
            <person name="Land M."/>
            <person name="Hauser L."/>
            <person name="Kyrpides N."/>
            <person name="Kim E."/>
            <person name="Tebo B.M."/>
            <person name="Richardson P."/>
        </authorList>
    </citation>
    <scope>NUCLEOTIDE SEQUENCE [LARGE SCALE GENOMIC DNA]</scope>
    <source>
        <strain>ATCC BAA-1160 / DSM 100696 / MI-1</strain>
    </source>
</reference>
<name>NIFH_DESRM</name>
<feature type="chain" id="PRO_1000211868" description="Nitrogenase iron protein">
    <location>
        <begin position="1"/>
        <end position="272"/>
    </location>
</feature>
<feature type="binding site" evidence="1">
    <location>
        <begin position="8"/>
        <end position="15"/>
    </location>
    <ligand>
        <name>ATP</name>
        <dbReference type="ChEBI" id="CHEBI:30616"/>
    </ligand>
</feature>
<feature type="binding site" evidence="1">
    <location>
        <position position="94"/>
    </location>
    <ligand>
        <name>[4Fe-4S] cluster</name>
        <dbReference type="ChEBI" id="CHEBI:49883"/>
        <note>ligand shared between dimeric partners</note>
    </ligand>
</feature>
<feature type="binding site" evidence="1">
    <location>
        <position position="129"/>
    </location>
    <ligand>
        <name>[4Fe-4S] cluster</name>
        <dbReference type="ChEBI" id="CHEBI:49883"/>
        <note>ligand shared between dimeric partners</note>
    </ligand>
</feature>
<feature type="modified residue" description="ADP-ribosylarginine; by dinitrogenase reductase ADP-ribosyltransferase" evidence="1">
    <location>
        <position position="97"/>
    </location>
</feature>
<protein>
    <recommendedName>
        <fullName evidence="1">Nitrogenase iron protein</fullName>
        <ecNumber evidence="1">1.18.6.1</ecNumber>
    </recommendedName>
    <alternativeName>
        <fullName evidence="1">Nitrogenase Fe protein</fullName>
    </alternativeName>
    <alternativeName>
        <fullName evidence="1">Nitrogenase component II</fullName>
    </alternativeName>
    <alternativeName>
        <fullName evidence="1">Nitrogenase reductase</fullName>
    </alternativeName>
</protein>
<evidence type="ECO:0000255" key="1">
    <source>
        <dbReference type="HAMAP-Rule" id="MF_00533"/>
    </source>
</evidence>
<proteinExistence type="inferred from homology"/>
<gene>
    <name evidence="1" type="primary">nifH</name>
    <name type="ordered locus">Dred_2821</name>
</gene>
<keyword id="KW-0004">4Fe-4S</keyword>
<keyword id="KW-0013">ADP-ribosylation</keyword>
<keyword id="KW-0067">ATP-binding</keyword>
<keyword id="KW-0408">Iron</keyword>
<keyword id="KW-0411">Iron-sulfur</keyword>
<keyword id="KW-0479">Metal-binding</keyword>
<keyword id="KW-0535">Nitrogen fixation</keyword>
<keyword id="KW-0547">Nucleotide-binding</keyword>
<keyword id="KW-0560">Oxidoreductase</keyword>
<keyword id="KW-1185">Reference proteome</keyword>
<organism>
    <name type="scientific">Desulforamulus reducens (strain ATCC BAA-1160 / DSM 100696 / MI-1)</name>
    <name type="common">Desulfotomaculum reducens</name>
    <dbReference type="NCBI Taxonomy" id="349161"/>
    <lineage>
        <taxon>Bacteria</taxon>
        <taxon>Bacillati</taxon>
        <taxon>Bacillota</taxon>
        <taxon>Clostridia</taxon>
        <taxon>Eubacteriales</taxon>
        <taxon>Peptococcaceae</taxon>
        <taxon>Desulforamulus</taxon>
    </lineage>
</organism>
<accession>A4J8C2</accession>
<sequence length="272" mass="29403">MRQIAIYGKGGIGKSTTTQNTVAALAEAGKKIMVVGCDPKADSTRLLLHGLNQKTVLDTLRDEGEDIDLEDVLKTGYGDTKCVESGGPEPGVGCAGRGIITSINLLESLGAYTNDLDYVFYDVLGDVVCGGFAMPIREGKAREIYIVASGEMMALYAANNISKGVQKFANTGGVRLGGIICNSRKVDNELELLTAFAKELGSQLIHFVPRDNMVQRAEINKKTVIDFDPAQPQADEYRTLAQNIDGNDMFVIPKPMTQDRLEELLMAHGILD</sequence>
<comment type="function">
    <text evidence="1">The key enzymatic reactions in nitrogen fixation are catalyzed by the nitrogenase complex, which has 2 components: the iron protein and the molybdenum-iron protein.</text>
</comment>
<comment type="catalytic activity">
    <reaction evidence="1">
        <text>N2 + 8 reduced [2Fe-2S]-[ferredoxin] + 16 ATP + 16 H2O = H2 + 8 oxidized [2Fe-2S]-[ferredoxin] + 2 NH4(+) + 16 ADP + 16 phosphate + 6 H(+)</text>
        <dbReference type="Rhea" id="RHEA:21448"/>
        <dbReference type="Rhea" id="RHEA-COMP:10000"/>
        <dbReference type="Rhea" id="RHEA-COMP:10001"/>
        <dbReference type="ChEBI" id="CHEBI:15377"/>
        <dbReference type="ChEBI" id="CHEBI:15378"/>
        <dbReference type="ChEBI" id="CHEBI:17997"/>
        <dbReference type="ChEBI" id="CHEBI:18276"/>
        <dbReference type="ChEBI" id="CHEBI:28938"/>
        <dbReference type="ChEBI" id="CHEBI:30616"/>
        <dbReference type="ChEBI" id="CHEBI:33737"/>
        <dbReference type="ChEBI" id="CHEBI:33738"/>
        <dbReference type="ChEBI" id="CHEBI:43474"/>
        <dbReference type="ChEBI" id="CHEBI:456216"/>
        <dbReference type="EC" id="1.18.6.1"/>
    </reaction>
</comment>
<comment type="cofactor">
    <cofactor evidence="1">
        <name>[4Fe-4S] cluster</name>
        <dbReference type="ChEBI" id="CHEBI:49883"/>
    </cofactor>
    <text evidence="1">Binds 1 [4Fe-4S] cluster per dimer.</text>
</comment>
<comment type="subunit">
    <text evidence="1">Homodimer.</text>
</comment>
<comment type="PTM">
    <text evidence="1">The reversible ADP-ribosylation of Arg-97 inactivates the nitrogenase reductase and regulates nitrogenase activity.</text>
</comment>
<comment type="similarity">
    <text evidence="1">Belongs to the NifH/BchL/ChlL family.</text>
</comment>